<feature type="chain" id="PRO_1000007869" description="4-diphosphocytidyl-2-C-methyl-D-erythritol kinase">
    <location>
        <begin position="1"/>
        <end position="311"/>
    </location>
</feature>
<feature type="active site" evidence="1">
    <location>
        <position position="16"/>
    </location>
</feature>
<feature type="active site" evidence="1">
    <location>
        <position position="142"/>
    </location>
</feature>
<feature type="binding site" evidence="1">
    <location>
        <begin position="100"/>
        <end position="110"/>
    </location>
    <ligand>
        <name>ATP</name>
        <dbReference type="ChEBI" id="CHEBI:30616"/>
    </ligand>
</feature>
<accession>A3PCS4</accession>
<dbReference type="EC" id="2.7.1.148" evidence="1"/>
<dbReference type="EMBL" id="CP000576">
    <property type="protein sequence ID" value="ABO17549.1"/>
    <property type="molecule type" value="Genomic_DNA"/>
</dbReference>
<dbReference type="RefSeq" id="WP_011862897.1">
    <property type="nucleotide sequence ID" value="NC_009091.1"/>
</dbReference>
<dbReference type="SMR" id="A3PCS4"/>
<dbReference type="STRING" id="167546.P9301_09261"/>
<dbReference type="KEGG" id="pmg:P9301_09261"/>
<dbReference type="eggNOG" id="COG1947">
    <property type="taxonomic scope" value="Bacteria"/>
</dbReference>
<dbReference type="HOGENOM" id="CLU_053057_1_1_3"/>
<dbReference type="OrthoDB" id="9809438at2"/>
<dbReference type="UniPathway" id="UPA00056">
    <property type="reaction ID" value="UER00094"/>
</dbReference>
<dbReference type="Proteomes" id="UP000001430">
    <property type="component" value="Chromosome"/>
</dbReference>
<dbReference type="GO" id="GO:0050515">
    <property type="term" value="F:4-(cytidine 5'-diphospho)-2-C-methyl-D-erythritol kinase activity"/>
    <property type="evidence" value="ECO:0007669"/>
    <property type="project" value="UniProtKB-UniRule"/>
</dbReference>
<dbReference type="GO" id="GO:0005524">
    <property type="term" value="F:ATP binding"/>
    <property type="evidence" value="ECO:0007669"/>
    <property type="project" value="UniProtKB-UniRule"/>
</dbReference>
<dbReference type="GO" id="GO:0019288">
    <property type="term" value="P:isopentenyl diphosphate biosynthetic process, methylerythritol 4-phosphate pathway"/>
    <property type="evidence" value="ECO:0007669"/>
    <property type="project" value="UniProtKB-UniRule"/>
</dbReference>
<dbReference type="GO" id="GO:0016114">
    <property type="term" value="P:terpenoid biosynthetic process"/>
    <property type="evidence" value="ECO:0007669"/>
    <property type="project" value="InterPro"/>
</dbReference>
<dbReference type="Gene3D" id="3.30.230.10">
    <property type="match status" value="1"/>
</dbReference>
<dbReference type="Gene3D" id="3.30.70.890">
    <property type="entry name" value="GHMP kinase, C-terminal domain"/>
    <property type="match status" value="1"/>
</dbReference>
<dbReference type="HAMAP" id="MF_00061">
    <property type="entry name" value="IspE"/>
    <property type="match status" value="1"/>
</dbReference>
<dbReference type="InterPro" id="IPR013750">
    <property type="entry name" value="GHMP_kinase_C_dom"/>
</dbReference>
<dbReference type="InterPro" id="IPR036554">
    <property type="entry name" value="GHMP_kinase_C_sf"/>
</dbReference>
<dbReference type="InterPro" id="IPR006204">
    <property type="entry name" value="GHMP_kinase_N_dom"/>
</dbReference>
<dbReference type="InterPro" id="IPR004424">
    <property type="entry name" value="IspE"/>
</dbReference>
<dbReference type="InterPro" id="IPR020568">
    <property type="entry name" value="Ribosomal_Su5_D2-typ_SF"/>
</dbReference>
<dbReference type="InterPro" id="IPR014721">
    <property type="entry name" value="Ribsml_uS5_D2-typ_fold_subgr"/>
</dbReference>
<dbReference type="NCBIfam" id="TIGR00154">
    <property type="entry name" value="ispE"/>
    <property type="match status" value="1"/>
</dbReference>
<dbReference type="PANTHER" id="PTHR43527">
    <property type="entry name" value="4-DIPHOSPHOCYTIDYL-2-C-METHYL-D-ERYTHRITOL KINASE, CHLOROPLASTIC"/>
    <property type="match status" value="1"/>
</dbReference>
<dbReference type="PANTHER" id="PTHR43527:SF2">
    <property type="entry name" value="4-DIPHOSPHOCYTIDYL-2-C-METHYL-D-ERYTHRITOL KINASE, CHLOROPLASTIC"/>
    <property type="match status" value="1"/>
</dbReference>
<dbReference type="Pfam" id="PF08544">
    <property type="entry name" value="GHMP_kinases_C"/>
    <property type="match status" value="1"/>
</dbReference>
<dbReference type="Pfam" id="PF00288">
    <property type="entry name" value="GHMP_kinases_N"/>
    <property type="match status" value="1"/>
</dbReference>
<dbReference type="PIRSF" id="PIRSF010376">
    <property type="entry name" value="IspE"/>
    <property type="match status" value="1"/>
</dbReference>
<dbReference type="SUPFAM" id="SSF55060">
    <property type="entry name" value="GHMP Kinase, C-terminal domain"/>
    <property type="match status" value="1"/>
</dbReference>
<dbReference type="SUPFAM" id="SSF54211">
    <property type="entry name" value="Ribosomal protein S5 domain 2-like"/>
    <property type="match status" value="1"/>
</dbReference>
<keyword id="KW-0067">ATP-binding</keyword>
<keyword id="KW-0414">Isoprene biosynthesis</keyword>
<keyword id="KW-0418">Kinase</keyword>
<keyword id="KW-0547">Nucleotide-binding</keyword>
<keyword id="KW-1185">Reference proteome</keyword>
<keyword id="KW-0808">Transferase</keyword>
<organism>
    <name type="scientific">Prochlorococcus marinus (strain MIT 9301)</name>
    <dbReference type="NCBI Taxonomy" id="167546"/>
    <lineage>
        <taxon>Bacteria</taxon>
        <taxon>Bacillati</taxon>
        <taxon>Cyanobacteriota</taxon>
        <taxon>Cyanophyceae</taxon>
        <taxon>Synechococcales</taxon>
        <taxon>Prochlorococcaceae</taxon>
        <taxon>Prochlorococcus</taxon>
    </lineage>
</organism>
<reference key="1">
    <citation type="journal article" date="2007" name="PLoS Genet.">
        <title>Patterns and implications of gene gain and loss in the evolution of Prochlorococcus.</title>
        <authorList>
            <person name="Kettler G.C."/>
            <person name="Martiny A.C."/>
            <person name="Huang K."/>
            <person name="Zucker J."/>
            <person name="Coleman M.L."/>
            <person name="Rodrigue S."/>
            <person name="Chen F."/>
            <person name="Lapidus A."/>
            <person name="Ferriera S."/>
            <person name="Johnson J."/>
            <person name="Steglich C."/>
            <person name="Church G.M."/>
            <person name="Richardson P."/>
            <person name="Chisholm S.W."/>
        </authorList>
    </citation>
    <scope>NUCLEOTIDE SEQUENCE [LARGE SCALE GENOMIC DNA]</scope>
    <source>
        <strain>MIT 9301</strain>
    </source>
</reference>
<sequence>MQDLAKPKIKIKSPAKINLHLEVIGKREDGFHELAMIMQNIDLSDYLEFEINNEGLIKLESDCNDLSLSDDNLIVKSANLLRKNSNINYGANIFLRKNIPIGAGLAGGSSNAAATLIGLNKLWNLDLDHGTLCSLASTLGSDIPFFINGGIQLCFGRGEILEKLDSNFEYGVILLKNPNVSVSTAETYKKYSNRFCDNHLNDRKMIENIRKNLRDNGLNKLNFDNQHLFIKNDLQLVVENENDSVKQALYLLSKLENCLTFSMSGSGPTCFALFKDIETAKKELTANSKFFKDKGYDSWVCTFLEKGITFI</sequence>
<comment type="function">
    <text evidence="1">Catalyzes the phosphorylation of the position 2 hydroxy group of 4-diphosphocytidyl-2C-methyl-D-erythritol.</text>
</comment>
<comment type="catalytic activity">
    <reaction evidence="1">
        <text>4-CDP-2-C-methyl-D-erythritol + ATP = 4-CDP-2-C-methyl-D-erythritol 2-phosphate + ADP + H(+)</text>
        <dbReference type="Rhea" id="RHEA:18437"/>
        <dbReference type="ChEBI" id="CHEBI:15378"/>
        <dbReference type="ChEBI" id="CHEBI:30616"/>
        <dbReference type="ChEBI" id="CHEBI:57823"/>
        <dbReference type="ChEBI" id="CHEBI:57919"/>
        <dbReference type="ChEBI" id="CHEBI:456216"/>
        <dbReference type="EC" id="2.7.1.148"/>
    </reaction>
</comment>
<comment type="pathway">
    <text evidence="1">Isoprenoid biosynthesis; isopentenyl diphosphate biosynthesis via DXP pathway; isopentenyl diphosphate from 1-deoxy-D-xylulose 5-phosphate: step 3/6.</text>
</comment>
<comment type="similarity">
    <text evidence="1">Belongs to the GHMP kinase family. IspE subfamily.</text>
</comment>
<gene>
    <name evidence="1" type="primary">ispE</name>
    <name type="ordered locus">P9301_09261</name>
</gene>
<proteinExistence type="inferred from homology"/>
<evidence type="ECO:0000255" key="1">
    <source>
        <dbReference type="HAMAP-Rule" id="MF_00061"/>
    </source>
</evidence>
<name>ISPE_PROM0</name>
<protein>
    <recommendedName>
        <fullName evidence="1">4-diphosphocytidyl-2-C-methyl-D-erythritol kinase</fullName>
        <shortName evidence="1">CMK</shortName>
        <ecNumber evidence="1">2.7.1.148</ecNumber>
    </recommendedName>
    <alternativeName>
        <fullName evidence="1">4-(cytidine-5'-diphospho)-2-C-methyl-D-erythritol kinase</fullName>
    </alternativeName>
</protein>